<organism>
    <name type="scientific">Actinobacillus pleuropneumoniae serotype 5b (strain L20)</name>
    <dbReference type="NCBI Taxonomy" id="416269"/>
    <lineage>
        <taxon>Bacteria</taxon>
        <taxon>Pseudomonadati</taxon>
        <taxon>Pseudomonadota</taxon>
        <taxon>Gammaproteobacteria</taxon>
        <taxon>Pasteurellales</taxon>
        <taxon>Pasteurellaceae</taxon>
        <taxon>Actinobacillus</taxon>
    </lineage>
</organism>
<protein>
    <recommendedName>
        <fullName evidence="1">Large ribosomal subunit protein uL11</fullName>
    </recommendedName>
    <alternativeName>
        <fullName evidence="2">50S ribosomal protein L11</fullName>
    </alternativeName>
</protein>
<comment type="function">
    <text evidence="1">Forms part of the ribosomal stalk which helps the ribosome interact with GTP-bound translation factors.</text>
</comment>
<comment type="subunit">
    <text evidence="1">Part of the ribosomal stalk of the 50S ribosomal subunit. Interacts with L10 and the large rRNA to form the base of the stalk. L10 forms an elongated spine to which L12 dimers bind in a sequential fashion forming a multimeric L10(L12)X complex.</text>
</comment>
<comment type="PTM">
    <text evidence="1">One or more lysine residues are methylated.</text>
</comment>
<comment type="similarity">
    <text evidence="1">Belongs to the universal ribosomal protein uL11 family.</text>
</comment>
<accession>A3N316</accession>
<keyword id="KW-0488">Methylation</keyword>
<keyword id="KW-1185">Reference proteome</keyword>
<keyword id="KW-0687">Ribonucleoprotein</keyword>
<keyword id="KW-0689">Ribosomal protein</keyword>
<keyword id="KW-0694">RNA-binding</keyword>
<keyword id="KW-0699">rRNA-binding</keyword>
<sequence length="142" mass="14962">MAKKVQAYVKLQVAAGMANPSPPVGPALGQQGVNIMEFCKAFNARTESLEKGLPIPVVITVYADRSFTFVTKTPPAAVLLKKAVGIKSGSGKPNKDKVGTVTQEQLRQIAETKAADMTGATIETKMKSIAGTARSMGLIVEE</sequence>
<reference key="1">
    <citation type="journal article" date="2008" name="J. Bacteriol.">
        <title>The complete genome sequence of Actinobacillus pleuropneumoniae L20 (serotype 5b).</title>
        <authorList>
            <person name="Foote S.J."/>
            <person name="Bosse J.T."/>
            <person name="Bouevitch A.B."/>
            <person name="Langford P.R."/>
            <person name="Young N.M."/>
            <person name="Nash J.H.E."/>
        </authorList>
    </citation>
    <scope>NUCLEOTIDE SEQUENCE [LARGE SCALE GENOMIC DNA]</scope>
    <source>
        <strain>L20</strain>
    </source>
</reference>
<name>RL11_ACTP2</name>
<evidence type="ECO:0000255" key="1">
    <source>
        <dbReference type="HAMAP-Rule" id="MF_00736"/>
    </source>
</evidence>
<evidence type="ECO:0000305" key="2"/>
<dbReference type="EMBL" id="CP000569">
    <property type="protein sequence ID" value="ABN74802.1"/>
    <property type="molecule type" value="Genomic_DNA"/>
</dbReference>
<dbReference type="RefSeq" id="WP_005599211.1">
    <property type="nucleotide sequence ID" value="NC_009053.1"/>
</dbReference>
<dbReference type="SMR" id="A3N316"/>
<dbReference type="STRING" id="416269.APL_1718"/>
<dbReference type="EnsemblBacteria" id="ABN74802">
    <property type="protein sequence ID" value="ABN74802"/>
    <property type="gene ID" value="APL_1718"/>
</dbReference>
<dbReference type="GeneID" id="92743718"/>
<dbReference type="KEGG" id="apl:APL_1718"/>
<dbReference type="eggNOG" id="COG0080">
    <property type="taxonomic scope" value="Bacteria"/>
</dbReference>
<dbReference type="HOGENOM" id="CLU_074237_2_0_6"/>
<dbReference type="Proteomes" id="UP000001432">
    <property type="component" value="Chromosome"/>
</dbReference>
<dbReference type="GO" id="GO:0022625">
    <property type="term" value="C:cytosolic large ribosomal subunit"/>
    <property type="evidence" value="ECO:0007669"/>
    <property type="project" value="TreeGrafter"/>
</dbReference>
<dbReference type="GO" id="GO:0070180">
    <property type="term" value="F:large ribosomal subunit rRNA binding"/>
    <property type="evidence" value="ECO:0007669"/>
    <property type="project" value="UniProtKB-UniRule"/>
</dbReference>
<dbReference type="GO" id="GO:0003735">
    <property type="term" value="F:structural constituent of ribosome"/>
    <property type="evidence" value="ECO:0007669"/>
    <property type="project" value="InterPro"/>
</dbReference>
<dbReference type="GO" id="GO:0006412">
    <property type="term" value="P:translation"/>
    <property type="evidence" value="ECO:0007669"/>
    <property type="project" value="UniProtKB-UniRule"/>
</dbReference>
<dbReference type="CDD" id="cd00349">
    <property type="entry name" value="Ribosomal_L11"/>
    <property type="match status" value="1"/>
</dbReference>
<dbReference type="FunFam" id="1.10.10.250:FF:000001">
    <property type="entry name" value="50S ribosomal protein L11"/>
    <property type="match status" value="1"/>
</dbReference>
<dbReference type="FunFam" id="3.30.1550.10:FF:000001">
    <property type="entry name" value="50S ribosomal protein L11"/>
    <property type="match status" value="1"/>
</dbReference>
<dbReference type="Gene3D" id="1.10.10.250">
    <property type="entry name" value="Ribosomal protein L11, C-terminal domain"/>
    <property type="match status" value="1"/>
</dbReference>
<dbReference type="Gene3D" id="3.30.1550.10">
    <property type="entry name" value="Ribosomal protein L11/L12, N-terminal domain"/>
    <property type="match status" value="1"/>
</dbReference>
<dbReference type="HAMAP" id="MF_00736">
    <property type="entry name" value="Ribosomal_uL11"/>
    <property type="match status" value="1"/>
</dbReference>
<dbReference type="InterPro" id="IPR000911">
    <property type="entry name" value="Ribosomal_uL11"/>
</dbReference>
<dbReference type="InterPro" id="IPR006519">
    <property type="entry name" value="Ribosomal_uL11_bac-typ"/>
</dbReference>
<dbReference type="InterPro" id="IPR020783">
    <property type="entry name" value="Ribosomal_uL11_C"/>
</dbReference>
<dbReference type="InterPro" id="IPR036769">
    <property type="entry name" value="Ribosomal_uL11_C_sf"/>
</dbReference>
<dbReference type="InterPro" id="IPR020784">
    <property type="entry name" value="Ribosomal_uL11_N"/>
</dbReference>
<dbReference type="InterPro" id="IPR036796">
    <property type="entry name" value="Ribosomal_uL11_N_sf"/>
</dbReference>
<dbReference type="NCBIfam" id="TIGR01632">
    <property type="entry name" value="L11_bact"/>
    <property type="match status" value="1"/>
</dbReference>
<dbReference type="PANTHER" id="PTHR11661">
    <property type="entry name" value="60S RIBOSOMAL PROTEIN L12"/>
    <property type="match status" value="1"/>
</dbReference>
<dbReference type="PANTHER" id="PTHR11661:SF1">
    <property type="entry name" value="LARGE RIBOSOMAL SUBUNIT PROTEIN UL11M"/>
    <property type="match status" value="1"/>
</dbReference>
<dbReference type="Pfam" id="PF00298">
    <property type="entry name" value="Ribosomal_L11"/>
    <property type="match status" value="1"/>
</dbReference>
<dbReference type="Pfam" id="PF03946">
    <property type="entry name" value="Ribosomal_L11_N"/>
    <property type="match status" value="1"/>
</dbReference>
<dbReference type="SMART" id="SM00649">
    <property type="entry name" value="RL11"/>
    <property type="match status" value="1"/>
</dbReference>
<dbReference type="SUPFAM" id="SSF54747">
    <property type="entry name" value="Ribosomal L11/L12e N-terminal domain"/>
    <property type="match status" value="1"/>
</dbReference>
<dbReference type="SUPFAM" id="SSF46906">
    <property type="entry name" value="Ribosomal protein L11, C-terminal domain"/>
    <property type="match status" value="1"/>
</dbReference>
<dbReference type="PROSITE" id="PS00359">
    <property type="entry name" value="RIBOSOMAL_L11"/>
    <property type="match status" value="1"/>
</dbReference>
<feature type="chain" id="PRO_1000046131" description="Large ribosomal subunit protein uL11">
    <location>
        <begin position="1"/>
        <end position="142"/>
    </location>
</feature>
<gene>
    <name evidence="1" type="primary">rplK</name>
    <name type="ordered locus">APL_1718</name>
</gene>
<proteinExistence type="inferred from homology"/>